<accession>P79288</accession>
<accession>Q5I6A2</accession>
<evidence type="ECO:0000250" key="1">
    <source>
        <dbReference type="UniProtKB" id="Q13886"/>
    </source>
</evidence>
<evidence type="ECO:0000255" key="2">
    <source>
        <dbReference type="PROSITE-ProRule" id="PRU00042"/>
    </source>
</evidence>
<evidence type="ECO:0000256" key="3">
    <source>
        <dbReference type="SAM" id="MobiDB-lite"/>
    </source>
</evidence>
<evidence type="ECO:0000305" key="4"/>
<reference key="1">
    <citation type="submission" date="2004-12" db="EMBL/GenBank/DDBJ databases">
        <authorList>
            <person name="Kerkvliet J.G."/>
            <person name="Sekar N."/>
            <person name="Veldhuis J.D."/>
        </authorList>
    </citation>
    <scope>NUCLEOTIDE SEQUENCE [MRNA]</scope>
</reference>
<reference key="2">
    <citation type="journal article" date="1997" name="Biol. Reprod.">
        <title>Cell-type expression, immunolocalization, and deoxyribonucleic acid-binding activity of basic transcription element binding transcription factor, an Sp-related family member, in porcine endometrium of pregnancy.</title>
        <authorList>
            <person name="Wang Y."/>
            <person name="Michel F.J."/>
            <person name="Wing A."/>
            <person name="Simmen F.A."/>
            <person name="Simmen R.C.M."/>
        </authorList>
    </citation>
    <scope>NUCLEOTIDE SEQUENCE [MRNA] OF 6-144</scope>
    <source>
        <tissue>Endometrium</tissue>
    </source>
</reference>
<gene>
    <name type="primary">KLF9</name>
    <name type="synonym">BTEB</name>
    <name type="synonym">BTEB1</name>
</gene>
<protein>
    <recommendedName>
        <fullName>Krueppel-like factor 9</fullName>
    </recommendedName>
    <alternativeName>
        <fullName>Basic transcription element-binding protein 1</fullName>
        <shortName>BTE-binding protein 1</shortName>
    </alternativeName>
    <alternativeName>
        <fullName>GC-box-binding protein 1</fullName>
    </alternativeName>
    <alternativeName>
        <fullName>Transcription factor BTEB1</fullName>
    </alternativeName>
</protein>
<dbReference type="EMBL" id="AY850383">
    <property type="protein sequence ID" value="AAW34126.1"/>
    <property type="molecule type" value="mRNA"/>
</dbReference>
<dbReference type="EMBL" id="U57346">
    <property type="protein sequence ID" value="AAC48767.1"/>
    <property type="status" value="ALT_FRAME"/>
    <property type="molecule type" value="mRNA"/>
</dbReference>
<dbReference type="RefSeq" id="NP_001011504.1">
    <property type="nucleotide sequence ID" value="NM_001011504.1"/>
</dbReference>
<dbReference type="SMR" id="P79288"/>
<dbReference type="FunCoup" id="P79288">
    <property type="interactions" value="32"/>
</dbReference>
<dbReference type="IntAct" id="P79288">
    <property type="interactions" value="1"/>
</dbReference>
<dbReference type="PaxDb" id="9823-ENSSSCP00000023475"/>
<dbReference type="Ensembl" id="ENSSSCT00015107397.1">
    <property type="protein sequence ID" value="ENSSSCP00015045382.1"/>
    <property type="gene ID" value="ENSSSCG00015079184.1"/>
</dbReference>
<dbReference type="Ensembl" id="ENSSSCT00025068900.1">
    <property type="protein sequence ID" value="ENSSSCP00025029667.1"/>
    <property type="gene ID" value="ENSSSCG00025050447.1"/>
</dbReference>
<dbReference type="Ensembl" id="ENSSSCT00030061264.1">
    <property type="protein sequence ID" value="ENSSSCP00030028020.1"/>
    <property type="gene ID" value="ENSSSCG00030043922.1"/>
</dbReference>
<dbReference type="Ensembl" id="ENSSSCT00035049713.1">
    <property type="protein sequence ID" value="ENSSSCP00035019880.1"/>
    <property type="gene ID" value="ENSSSCG00035037510.1"/>
</dbReference>
<dbReference type="Ensembl" id="ENSSSCT00040093409.1">
    <property type="protein sequence ID" value="ENSSSCP00040041266.1"/>
    <property type="gene ID" value="ENSSSCG00040068215.1"/>
</dbReference>
<dbReference type="Ensembl" id="ENSSSCT00045051311.1">
    <property type="protein sequence ID" value="ENSSSCP00045035673.1"/>
    <property type="gene ID" value="ENSSSCG00045030099.1"/>
</dbReference>
<dbReference type="Ensembl" id="ENSSSCT00050004224.1">
    <property type="protein sequence ID" value="ENSSSCP00050001636.1"/>
    <property type="gene ID" value="ENSSSCG00050003198.1"/>
</dbReference>
<dbReference type="Ensembl" id="ENSSSCT00055009044.1">
    <property type="protein sequence ID" value="ENSSSCP00055007162.1"/>
    <property type="gene ID" value="ENSSSCG00055004595.1"/>
</dbReference>
<dbReference type="Ensembl" id="ENSSSCT00060044512.1">
    <property type="protein sequence ID" value="ENSSSCP00060018982.1"/>
    <property type="gene ID" value="ENSSSCG00060032877.1"/>
</dbReference>
<dbReference type="Ensembl" id="ENSSSCT00065068706.1">
    <property type="protein sequence ID" value="ENSSSCP00065029923.1"/>
    <property type="gene ID" value="ENSSSCG00065050158.1"/>
</dbReference>
<dbReference type="Ensembl" id="ENSSSCT00070057476.1">
    <property type="protein sequence ID" value="ENSSSCP00070048864.1"/>
    <property type="gene ID" value="ENSSSCG00070028638.1"/>
</dbReference>
<dbReference type="Ensembl" id="ENSSSCT00105032577">
    <property type="protein sequence ID" value="ENSSSCP00105022848"/>
    <property type="gene ID" value="ENSSSCG00105016915"/>
</dbReference>
<dbReference type="Ensembl" id="ENSSSCT00110038917">
    <property type="protein sequence ID" value="ENSSSCP00110026879"/>
    <property type="gene ID" value="ENSSSCG00110020256"/>
</dbReference>
<dbReference type="Ensembl" id="ENSSSCT00115007043">
    <property type="protein sequence ID" value="ENSSSCP00115006604"/>
    <property type="gene ID" value="ENSSSCG00115004099"/>
</dbReference>
<dbReference type="Ensembl" id="ENSSSCT00130058328">
    <property type="protein sequence ID" value="ENSSSCP00130041865"/>
    <property type="gene ID" value="ENSSSCG00130029852"/>
</dbReference>
<dbReference type="GeneID" id="494562"/>
<dbReference type="KEGG" id="ssc:494562"/>
<dbReference type="CTD" id="687"/>
<dbReference type="eggNOG" id="KOG1721">
    <property type="taxonomic scope" value="Eukaryota"/>
</dbReference>
<dbReference type="HOGENOM" id="CLU_002678_33_2_1"/>
<dbReference type="InParanoid" id="P79288"/>
<dbReference type="OrthoDB" id="6365676at2759"/>
<dbReference type="TreeFam" id="TF351003"/>
<dbReference type="Proteomes" id="UP000008227">
    <property type="component" value="Unplaced"/>
</dbReference>
<dbReference type="Proteomes" id="UP000314985">
    <property type="component" value="Chromosome 1"/>
</dbReference>
<dbReference type="Proteomes" id="UP000694570">
    <property type="component" value="Unplaced"/>
</dbReference>
<dbReference type="Proteomes" id="UP000694571">
    <property type="component" value="Unplaced"/>
</dbReference>
<dbReference type="Proteomes" id="UP000694720">
    <property type="component" value="Unplaced"/>
</dbReference>
<dbReference type="Proteomes" id="UP000694722">
    <property type="component" value="Unplaced"/>
</dbReference>
<dbReference type="Proteomes" id="UP000694723">
    <property type="component" value="Unplaced"/>
</dbReference>
<dbReference type="Proteomes" id="UP000694724">
    <property type="component" value="Unplaced"/>
</dbReference>
<dbReference type="Proteomes" id="UP000694725">
    <property type="component" value="Unplaced"/>
</dbReference>
<dbReference type="Proteomes" id="UP000694726">
    <property type="component" value="Unplaced"/>
</dbReference>
<dbReference type="Proteomes" id="UP000694727">
    <property type="component" value="Unplaced"/>
</dbReference>
<dbReference type="Proteomes" id="UP000694728">
    <property type="component" value="Unplaced"/>
</dbReference>
<dbReference type="GO" id="GO:0005634">
    <property type="term" value="C:nucleus"/>
    <property type="evidence" value="ECO:0000250"/>
    <property type="project" value="UniProtKB"/>
</dbReference>
<dbReference type="GO" id="GO:0000981">
    <property type="term" value="F:DNA-binding transcription factor activity, RNA polymerase II-specific"/>
    <property type="evidence" value="ECO:0000318"/>
    <property type="project" value="GO_Central"/>
</dbReference>
<dbReference type="GO" id="GO:0000978">
    <property type="term" value="F:RNA polymerase II cis-regulatory region sequence-specific DNA binding"/>
    <property type="evidence" value="ECO:0000318"/>
    <property type="project" value="GO_Central"/>
</dbReference>
<dbReference type="GO" id="GO:0008270">
    <property type="term" value="F:zinc ion binding"/>
    <property type="evidence" value="ECO:0007669"/>
    <property type="project" value="UniProtKB-KW"/>
</dbReference>
<dbReference type="GO" id="GO:0071387">
    <property type="term" value="P:cellular response to cortisol stimulus"/>
    <property type="evidence" value="ECO:0000250"/>
    <property type="project" value="UniProtKB"/>
</dbReference>
<dbReference type="GO" id="GO:0010839">
    <property type="term" value="P:negative regulation of keratinocyte proliferation"/>
    <property type="evidence" value="ECO:0000250"/>
    <property type="project" value="UniProtKB"/>
</dbReference>
<dbReference type="GO" id="GO:0006357">
    <property type="term" value="P:regulation of transcription by RNA polymerase II"/>
    <property type="evidence" value="ECO:0000318"/>
    <property type="project" value="GO_Central"/>
</dbReference>
<dbReference type="GO" id="GO:0048511">
    <property type="term" value="P:rhythmic process"/>
    <property type="evidence" value="ECO:0007669"/>
    <property type="project" value="UniProtKB-KW"/>
</dbReference>
<dbReference type="CDD" id="cd21578">
    <property type="entry name" value="KLF9_N"/>
    <property type="match status" value="1"/>
</dbReference>
<dbReference type="FunFam" id="3.30.160.60:FF:000018">
    <property type="entry name" value="Krueppel-like factor 15"/>
    <property type="match status" value="1"/>
</dbReference>
<dbReference type="FunFam" id="3.30.160.60:FF:000232">
    <property type="entry name" value="Krueppel-like factor 9"/>
    <property type="match status" value="1"/>
</dbReference>
<dbReference type="FunFam" id="3.30.160.60:FF:000521">
    <property type="entry name" value="Krueppel-like factor 9"/>
    <property type="match status" value="1"/>
</dbReference>
<dbReference type="Gene3D" id="3.30.160.60">
    <property type="entry name" value="Classic Zinc Finger"/>
    <property type="match status" value="3"/>
</dbReference>
<dbReference type="InterPro" id="IPR036236">
    <property type="entry name" value="Znf_C2H2_sf"/>
</dbReference>
<dbReference type="InterPro" id="IPR013087">
    <property type="entry name" value="Znf_C2H2_type"/>
</dbReference>
<dbReference type="PANTHER" id="PTHR23235:SF132">
    <property type="entry name" value="KRUEPPEL-LIKE FACTOR 9"/>
    <property type="match status" value="1"/>
</dbReference>
<dbReference type="PANTHER" id="PTHR23235">
    <property type="entry name" value="KRUEPPEL-LIKE TRANSCRIPTION FACTOR"/>
    <property type="match status" value="1"/>
</dbReference>
<dbReference type="Pfam" id="PF00096">
    <property type="entry name" value="zf-C2H2"/>
    <property type="match status" value="3"/>
</dbReference>
<dbReference type="SMART" id="SM00355">
    <property type="entry name" value="ZnF_C2H2"/>
    <property type="match status" value="3"/>
</dbReference>
<dbReference type="SUPFAM" id="SSF57667">
    <property type="entry name" value="beta-beta-alpha zinc fingers"/>
    <property type="match status" value="2"/>
</dbReference>
<dbReference type="PROSITE" id="PS00028">
    <property type="entry name" value="ZINC_FINGER_C2H2_1"/>
    <property type="match status" value="3"/>
</dbReference>
<dbReference type="PROSITE" id="PS50157">
    <property type="entry name" value="ZINC_FINGER_C2H2_2"/>
    <property type="match status" value="3"/>
</dbReference>
<feature type="chain" id="PRO_0000047156" description="Krueppel-like factor 9">
    <location>
        <begin position="1"/>
        <end position="244"/>
    </location>
</feature>
<feature type="zinc finger region" description="C2H2-type 1" evidence="2">
    <location>
        <begin position="143"/>
        <end position="167"/>
    </location>
</feature>
<feature type="zinc finger region" description="C2H2-type 2" evidence="2">
    <location>
        <begin position="173"/>
        <end position="197"/>
    </location>
</feature>
<feature type="zinc finger region" description="C2H2-type 3" evidence="2">
    <location>
        <begin position="203"/>
        <end position="225"/>
    </location>
</feature>
<feature type="region of interest" description="Disordered" evidence="3">
    <location>
        <begin position="24"/>
        <end position="51"/>
    </location>
</feature>
<feature type="region of interest" description="Disordered" evidence="3">
    <location>
        <begin position="80"/>
        <end position="142"/>
    </location>
</feature>
<feature type="compositionally biased region" description="Basic and acidic residues" evidence="3">
    <location>
        <begin position="32"/>
        <end position="51"/>
    </location>
</feature>
<feature type="modified residue" description="Phosphoserine" evidence="1">
    <location>
        <position position="122"/>
    </location>
</feature>
<feature type="sequence conflict" description="In Ref. 2; AAC48767." evidence="4" ref="2">
    <location>
        <position position="24"/>
    </location>
</feature>
<feature type="sequence conflict" description="In Ref. 2; AAC48767." evidence="4" ref="2">
    <original>G</original>
    <variation>V</variation>
    <location>
        <position position="29"/>
    </location>
</feature>
<name>KLF9_PIG</name>
<keyword id="KW-0090">Biological rhythms</keyword>
<keyword id="KW-0238">DNA-binding</keyword>
<keyword id="KW-0479">Metal-binding</keyword>
<keyword id="KW-0539">Nucleus</keyword>
<keyword id="KW-0597">Phosphoprotein</keyword>
<keyword id="KW-1185">Reference proteome</keyword>
<keyword id="KW-0677">Repeat</keyword>
<keyword id="KW-0804">Transcription</keyword>
<keyword id="KW-0805">Transcription regulation</keyword>
<keyword id="KW-0862">Zinc</keyword>
<keyword id="KW-0863">Zinc-finger</keyword>
<organism>
    <name type="scientific">Sus scrofa</name>
    <name type="common">Pig</name>
    <dbReference type="NCBI Taxonomy" id="9823"/>
    <lineage>
        <taxon>Eukaryota</taxon>
        <taxon>Metazoa</taxon>
        <taxon>Chordata</taxon>
        <taxon>Craniata</taxon>
        <taxon>Vertebrata</taxon>
        <taxon>Euteleostomi</taxon>
        <taxon>Mammalia</taxon>
        <taxon>Eutheria</taxon>
        <taxon>Laurasiatheria</taxon>
        <taxon>Artiodactyla</taxon>
        <taxon>Suina</taxon>
        <taxon>Suidae</taxon>
        <taxon>Sus</taxon>
    </lineage>
</organism>
<proteinExistence type="evidence at transcript level"/>
<comment type="function">
    <text evidence="1">Transcription factor that binds to GC box promoter elements. Selectively activates mRNA synthesis from genes containing tandem repeats of GC boxes but represses genes with a single GC box. Acts as an epidermal circadian transcription factor regulating keratinocyte proliferation.</text>
</comment>
<comment type="subunit">
    <text evidence="1">Interacts with ZZEF1.</text>
</comment>
<comment type="subcellular location">
    <subcellularLocation>
        <location evidence="1">Nucleus</location>
    </subcellularLocation>
</comment>
<comment type="similarity">
    <text evidence="4">Belongs to the Sp1 C2H2-type zinc-finger protein family.</text>
</comment>
<comment type="sequence caution" evidence="4">
    <conflict type="frameshift">
        <sequence resource="EMBL-CDS" id="AAC48767"/>
    </conflict>
</comment>
<sequence length="244" mass="27219">MSAAAYMDFVAAQCLVSISNRAAVPEHGGAPDAERLRLPEREVTKEHGDPGDTWKDYCTLVTIAKSLLDLNKYRPIQTPSVCSDSLESPDEDMGSDSDVTTESGSSPSHSPEERQDPGSAPSPLSLLHPGVAAKGKHASEKRHKCPYSGCGKVYGKSSHLKAHYRVHTGERPFPCTWPDCLKKFSRSDELTRHYRTHTGEKQFRCPLCEKRFMRSDHLTKHARRHTEFHPSMIKRSKKALANPL</sequence>